<keyword id="KW-0027">Amidation</keyword>
<keyword id="KW-0165">Cleavage on pair of basic residues</keyword>
<keyword id="KW-0372">Hormone</keyword>
<keyword id="KW-0964">Secreted</keyword>
<keyword id="KW-0732">Signal</keyword>
<dbReference type="EMBL" id="X58784">
    <property type="protein sequence ID" value="CAA41589.1"/>
    <property type="molecule type" value="mRNA"/>
</dbReference>
<dbReference type="PIR" id="S14597">
    <property type="entry name" value="S14597"/>
</dbReference>
<dbReference type="GO" id="GO:0005576">
    <property type="term" value="C:extracellular region"/>
    <property type="evidence" value="ECO:0007669"/>
    <property type="project" value="UniProtKB-SubCell"/>
</dbReference>
<dbReference type="GO" id="GO:0005179">
    <property type="term" value="F:hormone activity"/>
    <property type="evidence" value="ECO:0007669"/>
    <property type="project" value="UniProtKB-KW"/>
</dbReference>
<dbReference type="Gene3D" id="6.10.250.1920">
    <property type="match status" value="1"/>
</dbReference>
<dbReference type="InterPro" id="IPR018446">
    <property type="entry name" value="Corticotropin-releasing_fac_CS"/>
</dbReference>
<dbReference type="InterPro" id="IPR000187">
    <property type="entry name" value="CRF"/>
</dbReference>
<dbReference type="InterPro" id="IPR003620">
    <property type="entry name" value="Urocortin_CRF"/>
</dbReference>
<dbReference type="PANTHER" id="PTHR15035:SF9">
    <property type="entry name" value="CORTICOLIBERIN"/>
    <property type="match status" value="1"/>
</dbReference>
<dbReference type="PANTHER" id="PTHR15035">
    <property type="entry name" value="CORTICOLIBERIN/UROCORTIN"/>
    <property type="match status" value="1"/>
</dbReference>
<dbReference type="Pfam" id="PF00473">
    <property type="entry name" value="CRF"/>
    <property type="match status" value="1"/>
</dbReference>
<dbReference type="PRINTS" id="PR01612">
    <property type="entry name" value="CRFFAMILY"/>
</dbReference>
<dbReference type="SMART" id="SM00039">
    <property type="entry name" value="CRF"/>
    <property type="match status" value="1"/>
</dbReference>
<dbReference type="PROSITE" id="PS00511">
    <property type="entry name" value="CRF"/>
    <property type="match status" value="1"/>
</dbReference>
<feature type="signal peptide">
    <location>
        <begin position="1"/>
        <end position="24"/>
    </location>
</feature>
<feature type="propeptide" id="PRO_0000006228">
    <location>
        <begin position="25"/>
        <end position="119"/>
    </location>
</feature>
<feature type="peptide" id="PRO_0000006229" description="Corticoliberin-2">
    <location>
        <begin position="120"/>
        <end position="160"/>
    </location>
</feature>
<feature type="region of interest" description="Disordered" evidence="1">
    <location>
        <begin position="57"/>
        <end position="79"/>
    </location>
</feature>
<feature type="modified residue" description="Phenylalanine amide" evidence="2">
    <location>
        <position position="160"/>
    </location>
</feature>
<reference key="1">
    <citation type="journal article" date="1991" name="Mol. Mar. Biol. Biotechnol.">
        <title>Corticotropin-releasing factor (CRF) gene family in the brain of the teleost fish Catostomus commersoni (white sucker): molecular analysis predicts distinct precursors for two CRFs and one urotensin I peptide.</title>
        <authorList>
            <person name="Morley S.D."/>
            <person name="Schonrock C."/>
            <person name="Richter D."/>
            <person name="Okawara Y."/>
            <person name="Lederis K."/>
        </authorList>
    </citation>
    <scope>NUCLEOTIDE SEQUENCE [MRNA]</scope>
    <scope>AMIDATION AT PHE-160</scope>
    <source>
        <tissue>Hypothalamus</tissue>
    </source>
</reference>
<name>CRF2_CATCO</name>
<accession>P25308</accession>
<protein>
    <recommendedName>
        <fullName>Corticoliberin-2</fullName>
    </recommendedName>
    <alternativeName>
        <fullName>Corticotropin-releasing factor 2</fullName>
        <shortName>CRF 2</shortName>
    </alternativeName>
    <alternativeName>
        <fullName>Corticotropin-releasing hormone 2</fullName>
    </alternativeName>
</protein>
<evidence type="ECO:0000256" key="1">
    <source>
        <dbReference type="SAM" id="MobiDB-lite"/>
    </source>
</evidence>
<evidence type="ECO:0000269" key="2">
    <source>
    </source>
</evidence>
<evidence type="ECO:0000305" key="3"/>
<organism>
    <name type="scientific">Catostomus commersonii</name>
    <name type="common">White sucker</name>
    <name type="synonym">Cyprinus commersonnii</name>
    <dbReference type="NCBI Taxonomy" id="7971"/>
    <lineage>
        <taxon>Eukaryota</taxon>
        <taxon>Metazoa</taxon>
        <taxon>Chordata</taxon>
        <taxon>Craniata</taxon>
        <taxon>Vertebrata</taxon>
        <taxon>Euteleostomi</taxon>
        <taxon>Actinopterygii</taxon>
        <taxon>Neopterygii</taxon>
        <taxon>Teleostei</taxon>
        <taxon>Ostariophysi</taxon>
        <taxon>Cypriniformes</taxon>
        <taxon>Catostomoidei</taxon>
        <taxon>Catostomidae</taxon>
        <taxon>Catostomus</taxon>
    </lineage>
</organism>
<sequence>MRLNFLVTTMALLVAFPPPYECRAIDSSSNQPVTDPDEERQSPAVLARMGEEYFIRLGNRNKNSPRSPPDTYPEASQYSKRALQLQLTQRVLEGKVGNVGRWDGNYALRALDSEERERRSEEPPISLDLTFHLLREVLEMARAEQLVQQAHSNRKMMEIFGK</sequence>
<comment type="function">
    <text>This hormone from hypothalamus regulates the release of corticotropin from pituitary gland.</text>
</comment>
<comment type="subcellular location">
    <subcellularLocation>
        <location>Secreted</location>
    </subcellularLocation>
</comment>
<comment type="similarity">
    <text evidence="3">Belongs to the sauvagine/corticotropin-releasing factor/urotensin I family.</text>
</comment>
<gene>
    <name type="primary">crf2</name>
</gene>
<proteinExistence type="evidence at protein level"/>